<proteinExistence type="evidence at transcript level"/>
<organism>
    <name type="scientific">African swine fever virus (strain Badajoz 1971 Vero-adapted)</name>
    <name type="common">Ba71V</name>
    <name type="synonym">ASFV</name>
    <dbReference type="NCBI Taxonomy" id="10498"/>
    <lineage>
        <taxon>Viruses</taxon>
        <taxon>Varidnaviria</taxon>
        <taxon>Bamfordvirae</taxon>
        <taxon>Nucleocytoviricota</taxon>
        <taxon>Pokkesviricetes</taxon>
        <taxon>Asfuvirales</taxon>
        <taxon>Asfarviridae</taxon>
        <taxon>Asfivirus</taxon>
        <taxon>African swine fever virus</taxon>
    </lineage>
</organism>
<name>VF175_ASFB7</name>
<protein>
    <recommendedName>
        <fullName>Uncharacterized protein B175L</fullName>
        <shortName>pB175L</shortName>
    </recommendedName>
</protein>
<evidence type="ECO:0000269" key="1">
    <source>
    </source>
</evidence>
<evidence type="ECO:0000305" key="2"/>
<keyword id="KW-1185">Reference proteome</keyword>
<organismHost>
    <name type="scientific">Ornithodoros</name>
    <name type="common">relapsing fever ticks</name>
    <dbReference type="NCBI Taxonomy" id="6937"/>
</organismHost>
<organismHost>
    <name type="scientific">Sus scrofa</name>
    <name type="common">Pig</name>
    <dbReference type="NCBI Taxonomy" id="9823"/>
</organismHost>
<reference key="1">
    <citation type="journal article" date="1995" name="Virology">
        <title>Analysis of the complete nucleotide sequence of African swine fever virus.</title>
        <authorList>
            <person name="Yanez R.J."/>
            <person name="Rodriguez J.M."/>
            <person name="Nogal M.L."/>
            <person name="Yuste L."/>
            <person name="Enriquez C."/>
            <person name="Rodriguez J.F."/>
            <person name="Vinuela E."/>
        </authorList>
    </citation>
    <scope>NUCLEOTIDE SEQUENCE [LARGE SCALE GENOMIC DNA]</scope>
</reference>
<reference key="2">
    <citation type="journal article" date="2020" name="J. Virol.">
        <title>The African Swine Fever Virus Transcriptome.</title>
        <authorList>
            <person name="Cackett G."/>
            <person name="Matelska D."/>
            <person name="Sykora M."/>
            <person name="Portugal R."/>
            <person name="Malecki M."/>
            <person name="Baehler J."/>
            <person name="Dixon L."/>
            <person name="Werner F."/>
        </authorList>
    </citation>
    <scope>INDUCTION</scope>
</reference>
<comment type="induction">
    <text evidence="1">Expressed in the late phase of the viral replicative cycle.</text>
</comment>
<comment type="similarity">
    <text evidence="2">Belongs to the asfivirus B175L family.</text>
</comment>
<dbReference type="EMBL" id="U18466">
    <property type="protein sequence ID" value="AAA65315.1"/>
    <property type="molecule type" value="Genomic_DNA"/>
</dbReference>
<dbReference type="RefSeq" id="NP_042779.1">
    <property type="nucleotide sequence ID" value="NC_001659.2"/>
</dbReference>
<dbReference type="GeneID" id="22220315"/>
<dbReference type="KEGG" id="vg:22220315"/>
<dbReference type="Proteomes" id="UP000000624">
    <property type="component" value="Segment"/>
</dbReference>
<dbReference type="GO" id="GO:0008270">
    <property type="term" value="F:zinc ion binding"/>
    <property type="evidence" value="ECO:0007669"/>
    <property type="project" value="InterPro"/>
</dbReference>
<dbReference type="InterPro" id="IPR010507">
    <property type="entry name" value="Znf_MYM"/>
</dbReference>
<dbReference type="Pfam" id="PF06467">
    <property type="entry name" value="zf-FCS"/>
    <property type="match status" value="1"/>
</dbReference>
<gene>
    <name type="ordered locus">Ba71V-085</name>
    <name type="ORF">B175L</name>
</gene>
<accession>Q65174</accession>
<feature type="chain" id="PRO_0000373558" description="Uncharacterized protein B175L">
    <location>
        <begin position="1"/>
        <end position="175"/>
    </location>
</feature>
<sequence>METNCPNILYLSGITIEECLQTKKTATDTLNTNDDEAEVEKKLPSVFTTVSKWVTHSSFKCWTCHLYFKTVPKFVPTYMRENERGEIEMGVLGNFCSFSCAASYVDVHYTEPKRWEARELLNMLYRFFTSQWISYIKPAPSYTMRKEYGGKLSEEAFISELHTLEESISSKHIFI</sequence>